<evidence type="ECO:0000250" key="1"/>
<evidence type="ECO:0000250" key="2">
    <source>
        <dbReference type="UniProtKB" id="P68363"/>
    </source>
</evidence>
<evidence type="ECO:0000305" key="3"/>
<proteinExistence type="inferred from homology"/>
<accession>Q9ZRJ4</accession>
<protein>
    <recommendedName>
        <fullName>Tubulin alpha chain</fullName>
        <ecNumber evidence="2">3.6.5.-</ecNumber>
    </recommendedName>
</protein>
<name>TBA_CHLVU</name>
<gene>
    <name type="primary">TUBA</name>
    <name type="synonym">TUA1</name>
</gene>
<comment type="function">
    <text>Tubulin is the major constituent of microtubules, a cylinder consisting of laterally associated linear protofilaments composed of alpha- and beta-tubulin heterodimers. Microtubules grow by the addition of GTP-tubulin dimers to the microtubule end, where a stabilizing cap forms. Below the cap, tubulin dimers are in GDP-bound state, owing to GTPase activity of alpha-tubulin.</text>
</comment>
<comment type="catalytic activity">
    <reaction evidence="2">
        <text>GTP + H2O = GDP + phosphate + H(+)</text>
        <dbReference type="Rhea" id="RHEA:19669"/>
        <dbReference type="ChEBI" id="CHEBI:15377"/>
        <dbReference type="ChEBI" id="CHEBI:15378"/>
        <dbReference type="ChEBI" id="CHEBI:37565"/>
        <dbReference type="ChEBI" id="CHEBI:43474"/>
        <dbReference type="ChEBI" id="CHEBI:58189"/>
    </reaction>
    <physiologicalReaction direction="left-to-right" evidence="2">
        <dbReference type="Rhea" id="RHEA:19670"/>
    </physiologicalReaction>
</comment>
<comment type="cofactor">
    <cofactor evidence="2">
        <name>Mg(2+)</name>
        <dbReference type="ChEBI" id="CHEBI:18420"/>
    </cofactor>
</comment>
<comment type="subunit">
    <text>Dimer of alpha and beta chains. A typical microtubule is a hollow water-filled tube with an outer diameter of 25 nm and an inner diameter of 15 nM. Alpha-beta heterodimers associate head-to-tail to form protofilaments running lengthwise along the microtubule wall with the beta-tubulin subunit facing the microtubule plus end conferring a structural polarity. Microtubules usually have 13 protofilaments but different protofilament numbers can be found in some organisms and specialized cells.</text>
</comment>
<comment type="subcellular location">
    <subcellularLocation>
        <location>Cytoplasm</location>
        <location>Cytoskeleton</location>
    </subcellularLocation>
</comment>
<comment type="PTM">
    <text evidence="1">Undergoes a tyrosination/detyrosination cycle, the cyclic removal and re-addition of a C-terminal tyrosine residue by the enzymes tubulin tyrosine carboxypeptidase (TTCP) and tubulin tyrosine ligase (TTL), respectively.</text>
</comment>
<comment type="PTM">
    <text evidence="1">Acetylation of alpha chains at Lys-40 stabilizes microtubules and affects affinity and processivity of microtubule motors. This modification has a role in multiple cellular functions, ranging from cell motility, cell cycle progression or cell differentiation to intracellular trafficking and signaling (By similarity).</text>
</comment>
<comment type="similarity">
    <text evidence="3">Belongs to the tubulin family.</text>
</comment>
<dbReference type="EC" id="3.6.5.-" evidence="2"/>
<dbReference type="EMBL" id="D16504">
    <property type="protein sequence ID" value="BAA03955.1"/>
    <property type="molecule type" value="Genomic_DNA"/>
</dbReference>
<dbReference type="SMR" id="Q9ZRJ4"/>
<dbReference type="GO" id="GO:0005737">
    <property type="term" value="C:cytoplasm"/>
    <property type="evidence" value="ECO:0007669"/>
    <property type="project" value="UniProtKB-KW"/>
</dbReference>
<dbReference type="GO" id="GO:0005874">
    <property type="term" value="C:microtubule"/>
    <property type="evidence" value="ECO:0007669"/>
    <property type="project" value="UniProtKB-KW"/>
</dbReference>
<dbReference type="GO" id="GO:0005525">
    <property type="term" value="F:GTP binding"/>
    <property type="evidence" value="ECO:0007669"/>
    <property type="project" value="UniProtKB-KW"/>
</dbReference>
<dbReference type="GO" id="GO:0016787">
    <property type="term" value="F:hydrolase activity"/>
    <property type="evidence" value="ECO:0007669"/>
    <property type="project" value="UniProtKB-KW"/>
</dbReference>
<dbReference type="GO" id="GO:0046872">
    <property type="term" value="F:metal ion binding"/>
    <property type="evidence" value="ECO:0007669"/>
    <property type="project" value="UniProtKB-KW"/>
</dbReference>
<dbReference type="GO" id="GO:0005200">
    <property type="term" value="F:structural constituent of cytoskeleton"/>
    <property type="evidence" value="ECO:0007669"/>
    <property type="project" value="InterPro"/>
</dbReference>
<dbReference type="GO" id="GO:0007017">
    <property type="term" value="P:microtubule-based process"/>
    <property type="evidence" value="ECO:0007669"/>
    <property type="project" value="InterPro"/>
</dbReference>
<dbReference type="CDD" id="cd02186">
    <property type="entry name" value="alpha_tubulin"/>
    <property type="match status" value="1"/>
</dbReference>
<dbReference type="FunFam" id="1.10.287.600:FF:000005">
    <property type="entry name" value="Tubulin alpha chain"/>
    <property type="match status" value="1"/>
</dbReference>
<dbReference type="FunFam" id="3.30.1330.20:FF:000001">
    <property type="entry name" value="Tubulin alpha chain"/>
    <property type="match status" value="1"/>
</dbReference>
<dbReference type="FunFam" id="3.40.50.1440:FF:000004">
    <property type="entry name" value="Tubulin alpha chain"/>
    <property type="match status" value="1"/>
</dbReference>
<dbReference type="Gene3D" id="1.10.287.600">
    <property type="entry name" value="Helix hairpin bin"/>
    <property type="match status" value="1"/>
</dbReference>
<dbReference type="Gene3D" id="3.30.1330.20">
    <property type="entry name" value="Tubulin/FtsZ, C-terminal domain"/>
    <property type="match status" value="1"/>
</dbReference>
<dbReference type="Gene3D" id="3.40.50.1440">
    <property type="entry name" value="Tubulin/FtsZ, GTPase domain"/>
    <property type="match status" value="1"/>
</dbReference>
<dbReference type="InterPro" id="IPR002452">
    <property type="entry name" value="Alpha_tubulin"/>
</dbReference>
<dbReference type="InterPro" id="IPR008280">
    <property type="entry name" value="Tub_FtsZ_C"/>
</dbReference>
<dbReference type="InterPro" id="IPR000217">
    <property type="entry name" value="Tubulin"/>
</dbReference>
<dbReference type="InterPro" id="IPR037103">
    <property type="entry name" value="Tubulin/FtsZ-like_C"/>
</dbReference>
<dbReference type="InterPro" id="IPR018316">
    <property type="entry name" value="Tubulin/FtsZ_2-layer-sand-dom"/>
</dbReference>
<dbReference type="InterPro" id="IPR036525">
    <property type="entry name" value="Tubulin/FtsZ_GTPase_sf"/>
</dbReference>
<dbReference type="InterPro" id="IPR023123">
    <property type="entry name" value="Tubulin_C"/>
</dbReference>
<dbReference type="InterPro" id="IPR017975">
    <property type="entry name" value="Tubulin_CS"/>
</dbReference>
<dbReference type="InterPro" id="IPR003008">
    <property type="entry name" value="Tubulin_FtsZ_GTPase"/>
</dbReference>
<dbReference type="PANTHER" id="PTHR11588">
    <property type="entry name" value="TUBULIN"/>
    <property type="match status" value="1"/>
</dbReference>
<dbReference type="Pfam" id="PF00091">
    <property type="entry name" value="Tubulin"/>
    <property type="match status" value="1"/>
</dbReference>
<dbReference type="Pfam" id="PF03953">
    <property type="entry name" value="Tubulin_C"/>
    <property type="match status" value="1"/>
</dbReference>
<dbReference type="PRINTS" id="PR01162">
    <property type="entry name" value="ALPHATUBULIN"/>
</dbReference>
<dbReference type="PRINTS" id="PR01161">
    <property type="entry name" value="TUBULIN"/>
</dbReference>
<dbReference type="SMART" id="SM00864">
    <property type="entry name" value="Tubulin"/>
    <property type="match status" value="1"/>
</dbReference>
<dbReference type="SMART" id="SM00865">
    <property type="entry name" value="Tubulin_C"/>
    <property type="match status" value="1"/>
</dbReference>
<dbReference type="SUPFAM" id="SSF55307">
    <property type="entry name" value="Tubulin C-terminal domain-like"/>
    <property type="match status" value="1"/>
</dbReference>
<dbReference type="SUPFAM" id="SSF52490">
    <property type="entry name" value="Tubulin nucleotide-binding domain-like"/>
    <property type="match status" value="1"/>
</dbReference>
<dbReference type="PROSITE" id="PS00227">
    <property type="entry name" value="TUBULIN"/>
    <property type="match status" value="1"/>
</dbReference>
<feature type="chain" id="PRO_0000048153" description="Tubulin alpha chain">
    <location>
        <begin position="1"/>
        <end position="451"/>
    </location>
</feature>
<feature type="active site" evidence="2">
    <location>
        <position position="254"/>
    </location>
</feature>
<feature type="binding site" evidence="2">
    <location>
        <position position="11"/>
    </location>
    <ligand>
        <name>GTP</name>
        <dbReference type="ChEBI" id="CHEBI:37565"/>
    </ligand>
</feature>
<feature type="binding site" evidence="2">
    <location>
        <position position="71"/>
    </location>
    <ligand>
        <name>GTP</name>
        <dbReference type="ChEBI" id="CHEBI:37565"/>
    </ligand>
</feature>
<feature type="binding site" evidence="2">
    <location>
        <position position="71"/>
    </location>
    <ligand>
        <name>Mg(2+)</name>
        <dbReference type="ChEBI" id="CHEBI:18420"/>
    </ligand>
</feature>
<feature type="binding site" evidence="2">
    <location>
        <position position="144"/>
    </location>
    <ligand>
        <name>GTP</name>
        <dbReference type="ChEBI" id="CHEBI:37565"/>
    </ligand>
</feature>
<feature type="binding site" evidence="2">
    <location>
        <position position="145"/>
    </location>
    <ligand>
        <name>GTP</name>
        <dbReference type="ChEBI" id="CHEBI:37565"/>
    </ligand>
</feature>
<feature type="binding site" evidence="2">
    <location>
        <position position="179"/>
    </location>
    <ligand>
        <name>GTP</name>
        <dbReference type="ChEBI" id="CHEBI:37565"/>
    </ligand>
</feature>
<feature type="binding site" evidence="2">
    <location>
        <position position="206"/>
    </location>
    <ligand>
        <name>GTP</name>
        <dbReference type="ChEBI" id="CHEBI:37565"/>
    </ligand>
</feature>
<feature type="binding site" evidence="2">
    <location>
        <position position="228"/>
    </location>
    <ligand>
        <name>GTP</name>
        <dbReference type="ChEBI" id="CHEBI:37565"/>
    </ligand>
</feature>
<feature type="site" description="Involved in polymerization">
    <location>
        <position position="451"/>
    </location>
</feature>
<feature type="modified residue" description="N6-acetyllysine" evidence="1">
    <location>
        <position position="40"/>
    </location>
</feature>
<sequence>MREVISIHIGQAGIQVGNACWELYCLEHGIQPDGQMPSDKTIGGGDDAFNTFFSETGAGKHVPRCVFLDLEPTVIDEVRTGTYRQLFHPEQLISGKEDAANNFARGHYTIGKEIVDLCLDRIRKLADNCTGLQGFLVFNAVGGGTGSGLGSLLLERLSVDYGKKSKLGFTVYPSPQVSTAVVEPYNSVLSTHSLLEHTDVSVMLDNEAVYDICRRSLDIERPTYTNLNRLIAQVISSLTASLRFDGALNVDVTEFQTNLVPYPRIHFMLSSYSPVISAEKAYHEQLSVAEITNSAFEPASMMAKCDPRHGKYMACCLMYRGDVVPKDVNAAVATIKTKRTIQFVDWCPTGFKCGINYQPPTVVPGGDLAKVQRAVCMISNSTAIAEVFSRLDHKFDLMYAKRAFVHWYVGEGMEEGEFSEAREDLAALEKDYEEVGAESAEADGEDEGEEY</sequence>
<reference key="1">
    <citation type="journal article" date="1993" name="Plant Physiol.">
        <title>Nucleotide sequence of a Chlorella vulgaris alpha-tubulin gene.</title>
        <authorList>
            <person name="Yamada T."/>
            <person name="Maki S."/>
            <person name="Higashiyama T."/>
        </authorList>
    </citation>
    <scope>NUCLEOTIDE SEQUENCE [GENOMIC DNA]</scope>
    <source>
        <strain>IAM C-169</strain>
    </source>
</reference>
<keyword id="KW-0007">Acetylation</keyword>
<keyword id="KW-0963">Cytoplasm</keyword>
<keyword id="KW-0206">Cytoskeleton</keyword>
<keyword id="KW-0342">GTP-binding</keyword>
<keyword id="KW-0378">Hydrolase</keyword>
<keyword id="KW-0460">Magnesium</keyword>
<keyword id="KW-0479">Metal-binding</keyword>
<keyword id="KW-0493">Microtubule</keyword>
<keyword id="KW-0547">Nucleotide-binding</keyword>
<organism>
    <name type="scientific">Chlorella vulgaris</name>
    <name type="common">Green alga</name>
    <dbReference type="NCBI Taxonomy" id="3077"/>
    <lineage>
        <taxon>Eukaryota</taxon>
        <taxon>Viridiplantae</taxon>
        <taxon>Chlorophyta</taxon>
        <taxon>core chlorophytes</taxon>
        <taxon>Trebouxiophyceae</taxon>
        <taxon>Chlorellales</taxon>
        <taxon>Chlorellaceae</taxon>
        <taxon>Chlorella clade</taxon>
        <taxon>Chlorella</taxon>
    </lineage>
</organism>